<reference key="1">
    <citation type="journal article" date="2003" name="Proc. Natl. Acad. Sci. U.S.A.">
        <title>The genome sequence of Clostridium tetani, the causative agent of tetanus disease.</title>
        <authorList>
            <person name="Brueggemann H."/>
            <person name="Baeumer S."/>
            <person name="Fricke W.F."/>
            <person name="Wiezer A."/>
            <person name="Liesegang H."/>
            <person name="Decker I."/>
            <person name="Herzberg C."/>
            <person name="Martinez-Arias R."/>
            <person name="Merkl R."/>
            <person name="Henne A."/>
            <person name="Gottschalk G."/>
        </authorList>
    </citation>
    <scope>NUCLEOTIDE SEQUENCE [LARGE SCALE GENOMIC DNA]</scope>
    <source>
        <strain>Massachusetts / E88</strain>
    </source>
</reference>
<proteinExistence type="inferred from homology"/>
<organism>
    <name type="scientific">Clostridium tetani (strain Massachusetts / E88)</name>
    <dbReference type="NCBI Taxonomy" id="212717"/>
    <lineage>
        <taxon>Bacteria</taxon>
        <taxon>Bacillati</taxon>
        <taxon>Bacillota</taxon>
        <taxon>Clostridia</taxon>
        <taxon>Eubacteriales</taxon>
        <taxon>Clostridiaceae</taxon>
        <taxon>Clostridium</taxon>
    </lineage>
</organism>
<name>YIDC_CLOTE</name>
<evidence type="ECO:0000250" key="1"/>
<evidence type="ECO:0000255" key="2"/>
<evidence type="ECO:0000305" key="3"/>
<accession>Q899S4</accession>
<sequence length="220" mass="24985">MSHLNNALVEFFVIIHKFISSIITNPNYSYGVAIIFVTLIIKLILLPLNIKSMRSTIRINEIQPEIQKIQKKYKNDPQRLQQEQMKLYKEYNINPFGSCLPLLLQWPILIALYYVFNNIQGISGVSFLWVKDLASPDIVLAVLAGATQYYSGLLMNPKGDNTQAKTASNMNLSMSIMMIFISSRLKAALVIYWVTGNLIQMGQTILTKKLEQKHSANKDA</sequence>
<gene>
    <name type="primary">yidC</name>
    <name type="ordered locus">CTC_00096</name>
</gene>
<keyword id="KW-1003">Cell membrane</keyword>
<keyword id="KW-0143">Chaperone</keyword>
<keyword id="KW-0472">Membrane</keyword>
<keyword id="KW-0653">Protein transport</keyword>
<keyword id="KW-1185">Reference proteome</keyword>
<keyword id="KW-0812">Transmembrane</keyword>
<keyword id="KW-1133">Transmembrane helix</keyword>
<keyword id="KW-0813">Transport</keyword>
<comment type="function">
    <text evidence="1">Required for the insertion and/or proper folding and/or complex formation of integral membrane proteins into the membrane. Involved in integration of membrane proteins that insert both dependently and independently of the Sec translocase complex, as well as at least some lipoproteins. Aids folding of multispanning membrane proteins (By similarity).</text>
</comment>
<comment type="subunit">
    <text evidence="1">Interacts with the Sec translocase complex via SecD. Specifically interacts with transmembrane segments of nascent integral membrane proteins during membrane integration (By similarity).</text>
</comment>
<comment type="subcellular location">
    <subcellularLocation>
        <location evidence="1">Cell membrane</location>
        <topology evidence="1">Multi-pass membrane protein</topology>
    </subcellularLocation>
</comment>
<comment type="similarity">
    <text evidence="3">Belongs to the OXA1/ALB3/YidC family. Type 1 subfamily.</text>
</comment>
<protein>
    <recommendedName>
        <fullName>Membrane protein insertase YidC</fullName>
    </recommendedName>
    <alternativeName>
        <fullName>Foldase YidC</fullName>
    </alternativeName>
    <alternativeName>
        <fullName>Membrane integrase YidC</fullName>
    </alternativeName>
    <alternativeName>
        <fullName>Membrane protein YidC</fullName>
    </alternativeName>
</protein>
<dbReference type="EMBL" id="AE015927">
    <property type="protein sequence ID" value="AAO34748.1"/>
    <property type="molecule type" value="Genomic_DNA"/>
</dbReference>
<dbReference type="RefSeq" id="WP_011098420.1">
    <property type="nucleotide sequence ID" value="NC_004557.1"/>
</dbReference>
<dbReference type="SMR" id="Q899S4"/>
<dbReference type="STRING" id="212717.CTC_00096"/>
<dbReference type="GeneID" id="24254455"/>
<dbReference type="KEGG" id="ctc:CTC_00096"/>
<dbReference type="HOGENOM" id="CLU_036138_4_2_9"/>
<dbReference type="OrthoDB" id="9780552at2"/>
<dbReference type="Proteomes" id="UP000001412">
    <property type="component" value="Chromosome"/>
</dbReference>
<dbReference type="GO" id="GO:0005886">
    <property type="term" value="C:plasma membrane"/>
    <property type="evidence" value="ECO:0007669"/>
    <property type="project" value="UniProtKB-SubCell"/>
</dbReference>
<dbReference type="GO" id="GO:0032977">
    <property type="term" value="F:membrane insertase activity"/>
    <property type="evidence" value="ECO:0007669"/>
    <property type="project" value="InterPro"/>
</dbReference>
<dbReference type="GO" id="GO:0051205">
    <property type="term" value="P:protein insertion into membrane"/>
    <property type="evidence" value="ECO:0007669"/>
    <property type="project" value="TreeGrafter"/>
</dbReference>
<dbReference type="GO" id="GO:0015031">
    <property type="term" value="P:protein transport"/>
    <property type="evidence" value="ECO:0007669"/>
    <property type="project" value="UniProtKB-KW"/>
</dbReference>
<dbReference type="CDD" id="cd20070">
    <property type="entry name" value="5TM_YidC_Alb3"/>
    <property type="match status" value="1"/>
</dbReference>
<dbReference type="InterPro" id="IPR001708">
    <property type="entry name" value="YidC/ALB3/OXA1/COX18"/>
</dbReference>
<dbReference type="InterPro" id="IPR028055">
    <property type="entry name" value="YidC/Oxa/ALB_C"/>
</dbReference>
<dbReference type="InterPro" id="IPR047196">
    <property type="entry name" value="YidC_ALB_C"/>
</dbReference>
<dbReference type="NCBIfam" id="TIGR03592">
    <property type="entry name" value="yidC_oxa1_cterm"/>
    <property type="match status" value="1"/>
</dbReference>
<dbReference type="PANTHER" id="PTHR12428:SF65">
    <property type="entry name" value="CYTOCHROME C OXIDASE ASSEMBLY PROTEIN COX18, MITOCHONDRIAL"/>
    <property type="match status" value="1"/>
</dbReference>
<dbReference type="PANTHER" id="PTHR12428">
    <property type="entry name" value="OXA1"/>
    <property type="match status" value="1"/>
</dbReference>
<dbReference type="Pfam" id="PF02096">
    <property type="entry name" value="60KD_IMP"/>
    <property type="match status" value="1"/>
</dbReference>
<dbReference type="PRINTS" id="PR00701">
    <property type="entry name" value="60KDINNERMP"/>
</dbReference>
<feature type="chain" id="PRO_0000124779" description="Membrane protein insertase YidC">
    <location>
        <begin position="1"/>
        <end position="220"/>
    </location>
</feature>
<feature type="transmembrane region" description="Helical" evidence="2">
    <location>
        <begin position="4"/>
        <end position="24"/>
    </location>
</feature>
<feature type="transmembrane region" description="Helical" evidence="2">
    <location>
        <begin position="30"/>
        <end position="50"/>
    </location>
</feature>
<feature type="transmembrane region" description="Helical" evidence="2">
    <location>
        <begin position="96"/>
        <end position="116"/>
    </location>
</feature>
<feature type="transmembrane region" description="Helical" evidence="2">
    <location>
        <begin position="172"/>
        <end position="194"/>
    </location>
</feature>